<dbReference type="EC" id="3.1.-.-" evidence="1"/>
<dbReference type="EMBL" id="AF157706">
    <property type="protein sequence ID" value="AAD49667.1"/>
    <property type="molecule type" value="Genomic_DNA"/>
</dbReference>
<dbReference type="RefSeq" id="NP_050241.1">
    <property type="nucleotide sequence ID" value="NC_000898.1"/>
</dbReference>
<dbReference type="SMR" id="Q9QJ23"/>
<dbReference type="DNASU" id="1497066"/>
<dbReference type="GeneID" id="1497066"/>
<dbReference type="KEGG" id="vg:1497066"/>
<dbReference type="Proteomes" id="UP000006930">
    <property type="component" value="Segment"/>
</dbReference>
<dbReference type="GO" id="GO:0042025">
    <property type="term" value="C:host cell nucleus"/>
    <property type="evidence" value="ECO:0007669"/>
    <property type="project" value="UniProtKB-SubCell"/>
</dbReference>
<dbReference type="GO" id="GO:0003677">
    <property type="term" value="F:DNA binding"/>
    <property type="evidence" value="ECO:0007669"/>
    <property type="project" value="UniProtKB-KW"/>
</dbReference>
<dbReference type="GO" id="GO:0016787">
    <property type="term" value="F:hydrolase activity"/>
    <property type="evidence" value="ECO:0007669"/>
    <property type="project" value="UniProtKB-KW"/>
</dbReference>
<dbReference type="GO" id="GO:0051276">
    <property type="term" value="P:chromosome organization"/>
    <property type="evidence" value="ECO:0007669"/>
    <property type="project" value="InterPro"/>
</dbReference>
<dbReference type="Gene3D" id="3.30.420.320">
    <property type="match status" value="1"/>
</dbReference>
<dbReference type="Gene3D" id="3.40.50.300">
    <property type="entry name" value="P-loop containing nucleotide triphosphate hydrolases"/>
    <property type="match status" value="1"/>
</dbReference>
<dbReference type="HAMAP" id="MF_04013">
    <property type="entry name" value="HSV_TRM3"/>
    <property type="match status" value="1"/>
</dbReference>
<dbReference type="InterPro" id="IPR003498">
    <property type="entry name" value="DNA_pack_C"/>
</dbReference>
<dbReference type="InterPro" id="IPR038435">
    <property type="entry name" value="DNA_pack_C_sf"/>
</dbReference>
<dbReference type="InterPro" id="IPR003499">
    <property type="entry name" value="DNA_pack_N"/>
</dbReference>
<dbReference type="InterPro" id="IPR033663">
    <property type="entry name" value="HSV_TRM3"/>
</dbReference>
<dbReference type="InterPro" id="IPR027417">
    <property type="entry name" value="P-loop_NTPase"/>
</dbReference>
<dbReference type="Pfam" id="PF02499">
    <property type="entry name" value="DNA_pack_C"/>
    <property type="match status" value="1"/>
</dbReference>
<dbReference type="Pfam" id="PF02500">
    <property type="entry name" value="DNA_pack_N"/>
    <property type="match status" value="1"/>
</dbReference>
<comment type="function">
    <text evidence="1">Component of the molecular motor that translocates viral genomic DNA in empty capsid during DNA packaging. Forms a tripartite terminase complex together with TRM1 and TRM2 in the host cytoplasm. Once the complex reaches the host nucleus, it interacts with the capsid portal vertex. This portal forms a ring in which genomic DNA is translocated into the capsid. TRM3 carries an RNase H-like nuclease activity that plays an important role for the cleavage of concatemeric viral DNA into unit length genomes.</text>
</comment>
<comment type="subunit">
    <text evidence="1">Interacts with the terminase subunits TRM1 and TRM2. Interacts with portal protein.</text>
</comment>
<comment type="subcellular location">
    <subcellularLocation>
        <location evidence="1">Host nucleus</location>
    </subcellularLocation>
    <text evidence="1">Responsible for the nuclear localization of the two others subunits TRM1 and TRM2.</text>
</comment>
<comment type="similarity">
    <text evidence="1">Belongs to the herpesviridae TRM3 protein family.</text>
</comment>
<gene>
    <name evidence="1" type="primary">TRM3</name>
    <name type="ordered locus">U66</name>
</gene>
<keyword id="KW-0238">DNA-binding</keyword>
<keyword id="KW-1048">Host nucleus</keyword>
<keyword id="KW-0378">Hydrolase</keyword>
<keyword id="KW-1185">Reference proteome</keyword>
<keyword id="KW-0231">Viral genome packaging</keyword>
<keyword id="KW-1188">Viral release from host cell</keyword>
<evidence type="ECO:0000255" key="1">
    <source>
        <dbReference type="HAMAP-Rule" id="MF_04013"/>
    </source>
</evidence>
<reference key="1">
    <citation type="journal article" date="1999" name="J. Virol.">
        <title>Human herpesvirus 6B genome sequence: coding content and comparison with human herpesvirus 6A.</title>
        <authorList>
            <person name="Dominguez G."/>
            <person name="Dambaugh T.R."/>
            <person name="Stamey F.R."/>
            <person name="Dewhurst S."/>
            <person name="Inoue N."/>
            <person name="Pellett P.E."/>
        </authorList>
    </citation>
    <scope>NUCLEOTIDE SEQUENCE [LARGE SCALE GENOMIC DNA]</scope>
</reference>
<organismHost>
    <name type="scientific">Homo sapiens</name>
    <name type="common">Human</name>
    <dbReference type="NCBI Taxonomy" id="9606"/>
</organismHost>
<name>TRM3_HHV6Z</name>
<sequence>MLRTCDITHIKNNYEAIIWKGERNCSTISTKYPNSAIFYKKRFIMLTPELGFAHSYNQQVKPLYTFCEKQRHLKNRKPLTILPSLTRKLQEMKFLPASDKSFESQYTEFLESFKILYREPLFLQIDGFIKDFRKWIKGEFNDFGDTRKIQLEPFQKNILIHVIFFIAVTKLPALANRVINYLTHVFDIEFVNESTLNTLKQKTNVFLVPRRHGKTWFIVPIISFLLKNIEGISIGYVAHQKHVSHFVMKEVEFKCRRMFPEKTITCLDNVITIDHQNIKSTALFASCYNTHSIRGQSFNLLIVDESHFIKKDAFSTILGFLPQASTKILFISSTNSGNHSTSFLMKLNNSPFEMLSVVSYVCEDHAHMLNERGNATACSCYRLHKPKFISINAEVKKTANLFLEGAFIHEIMGGATCNVINDVLITEQGQTEFEFFRYSTINKNLIPFLGKDLYVYLDPAYTGNRRASGTGIAAIGTYLDQYIVYGMEHYFLESLMTSSDTAIAECAAHMILSILDLHPFFTEVKIIIEGNSNQASAVKIACIIKENITANKSIQVTFFHTPDQNQIAQPFYLLGKEKKLAVEFFISNFNSGNIKASQELISFTIKITYDPVEYALEQIRNIHQISVNNYITYSAKKQACSDDLIIAIIMAIYVCSGNSSASFREI</sequence>
<accession>Q9QJ23</accession>
<feature type="chain" id="PRO_0000408416" description="Tripartite terminase subunit 3">
    <location>
        <begin position="1"/>
        <end position="666"/>
    </location>
</feature>
<feature type="short sequence motif" description="Walker A motif" evidence="1">
    <location>
        <begin position="208"/>
        <end position="215"/>
    </location>
</feature>
<feature type="short sequence motif" description="Walker B motif" evidence="1">
    <location>
        <begin position="300"/>
        <end position="305"/>
    </location>
</feature>
<feature type="active site" description="For ATPase activity" evidence="1">
    <location>
        <position position="305"/>
    </location>
</feature>
<feature type="active site" description="For nuclease activity" evidence="1">
    <location>
        <position position="458"/>
    </location>
</feature>
<feature type="active site" description="For nuclease activity" evidence="1">
    <location>
        <position position="529"/>
    </location>
</feature>
<feature type="active site" description="For nuclease activity" evidence="1">
    <location>
        <position position="643"/>
    </location>
</feature>
<protein>
    <recommendedName>
        <fullName evidence="1">Tripartite terminase subunit 3</fullName>
        <ecNumber evidence="1">3.1.-.-</ecNumber>
    </recommendedName>
    <alternativeName>
        <fullName evidence="1">Terminase large subunit</fullName>
    </alternativeName>
</protein>
<proteinExistence type="inferred from homology"/>
<organism>
    <name type="scientific">Human herpesvirus 6B (strain Z29)</name>
    <name type="common">HHV-6 variant B</name>
    <name type="synonym">Human B lymphotropic virus</name>
    <dbReference type="NCBI Taxonomy" id="36351"/>
    <lineage>
        <taxon>Viruses</taxon>
        <taxon>Duplodnaviria</taxon>
        <taxon>Heunggongvirae</taxon>
        <taxon>Peploviricota</taxon>
        <taxon>Herviviricetes</taxon>
        <taxon>Herpesvirales</taxon>
        <taxon>Orthoherpesviridae</taxon>
        <taxon>Betaherpesvirinae</taxon>
        <taxon>Roseolovirus</taxon>
        <taxon>Roseolovirus humanbeta6b</taxon>
        <taxon>Human herpesvirus 6B</taxon>
    </lineage>
</organism>